<protein>
    <recommendedName>
        <fullName evidence="2">Small ribosomal subunit protein uS4c</fullName>
    </recommendedName>
    <alternativeName>
        <fullName>30S ribosomal protein S4, chloroplastic</fullName>
    </alternativeName>
</protein>
<gene>
    <name type="primary">rps4</name>
</gene>
<reference key="1">
    <citation type="submission" date="1999-11" db="EMBL/GenBank/DDBJ databases">
        <title>A molecular approach to bryophyte systematics.</title>
        <authorList>
            <person name="Capesius I."/>
            <person name="Bloecher R."/>
        </authorList>
    </citation>
    <scope>NUCLEOTIDE SEQUENCE [GENOMIC DNA]</scope>
    <source>
        <tissue>Gametophyte</tissue>
    </source>
</reference>
<feature type="chain" id="PRO_0000132660" description="Small ribosomal subunit protein uS4c">
    <location>
        <begin position="1"/>
        <end position="202"/>
    </location>
</feature>
<feature type="domain" description="S4 RNA-binding">
    <location>
        <begin position="90"/>
        <end position="154"/>
    </location>
</feature>
<keyword id="KW-0150">Chloroplast</keyword>
<keyword id="KW-0934">Plastid</keyword>
<keyword id="KW-0687">Ribonucleoprotein</keyword>
<keyword id="KW-0689">Ribosomal protein</keyword>
<keyword id="KW-0694">RNA-binding</keyword>
<keyword id="KW-0699">rRNA-binding</keyword>
<dbReference type="EMBL" id="AJ251062">
    <property type="protein sequence ID" value="CAB92155.1"/>
    <property type="molecule type" value="Genomic_DNA"/>
</dbReference>
<dbReference type="SMR" id="Q9M4C2"/>
<dbReference type="GO" id="GO:0009507">
    <property type="term" value="C:chloroplast"/>
    <property type="evidence" value="ECO:0007669"/>
    <property type="project" value="UniProtKB-SubCell"/>
</dbReference>
<dbReference type="GO" id="GO:0015935">
    <property type="term" value="C:small ribosomal subunit"/>
    <property type="evidence" value="ECO:0007669"/>
    <property type="project" value="InterPro"/>
</dbReference>
<dbReference type="GO" id="GO:0019843">
    <property type="term" value="F:rRNA binding"/>
    <property type="evidence" value="ECO:0007669"/>
    <property type="project" value="UniProtKB-UniRule"/>
</dbReference>
<dbReference type="GO" id="GO:0003735">
    <property type="term" value="F:structural constituent of ribosome"/>
    <property type="evidence" value="ECO:0007669"/>
    <property type="project" value="InterPro"/>
</dbReference>
<dbReference type="GO" id="GO:0042274">
    <property type="term" value="P:ribosomal small subunit biogenesis"/>
    <property type="evidence" value="ECO:0007669"/>
    <property type="project" value="TreeGrafter"/>
</dbReference>
<dbReference type="GO" id="GO:0006412">
    <property type="term" value="P:translation"/>
    <property type="evidence" value="ECO:0007669"/>
    <property type="project" value="UniProtKB-UniRule"/>
</dbReference>
<dbReference type="CDD" id="cd00165">
    <property type="entry name" value="S4"/>
    <property type="match status" value="1"/>
</dbReference>
<dbReference type="FunFam" id="1.10.1050.10:FF:000002">
    <property type="entry name" value="30S ribosomal protein S4, chloroplastic"/>
    <property type="match status" value="1"/>
</dbReference>
<dbReference type="FunFam" id="3.10.290.10:FF:000081">
    <property type="entry name" value="30S ribosomal protein S4, chloroplastic"/>
    <property type="match status" value="1"/>
</dbReference>
<dbReference type="Gene3D" id="1.10.1050.10">
    <property type="entry name" value="Ribosomal Protein S4 Delta 41, Chain A, domain 1"/>
    <property type="match status" value="1"/>
</dbReference>
<dbReference type="Gene3D" id="3.10.290.10">
    <property type="entry name" value="RNA-binding S4 domain"/>
    <property type="match status" value="1"/>
</dbReference>
<dbReference type="HAMAP" id="MF_01306_B">
    <property type="entry name" value="Ribosomal_uS4_B"/>
    <property type="match status" value="1"/>
</dbReference>
<dbReference type="InterPro" id="IPR022801">
    <property type="entry name" value="Ribosomal_uS4"/>
</dbReference>
<dbReference type="InterPro" id="IPR005709">
    <property type="entry name" value="Ribosomal_uS4_bac-type"/>
</dbReference>
<dbReference type="InterPro" id="IPR018079">
    <property type="entry name" value="Ribosomal_uS4_CS"/>
</dbReference>
<dbReference type="InterPro" id="IPR001912">
    <property type="entry name" value="Ribosomal_uS4_N"/>
</dbReference>
<dbReference type="InterPro" id="IPR002942">
    <property type="entry name" value="S4_RNA-bd"/>
</dbReference>
<dbReference type="InterPro" id="IPR036986">
    <property type="entry name" value="S4_RNA-bd_sf"/>
</dbReference>
<dbReference type="NCBIfam" id="NF003717">
    <property type="entry name" value="PRK05327.1"/>
    <property type="match status" value="1"/>
</dbReference>
<dbReference type="NCBIfam" id="TIGR01017">
    <property type="entry name" value="rpsD_bact"/>
    <property type="match status" value="1"/>
</dbReference>
<dbReference type="PANTHER" id="PTHR11831">
    <property type="entry name" value="30S 40S RIBOSOMAL PROTEIN"/>
    <property type="match status" value="1"/>
</dbReference>
<dbReference type="PANTHER" id="PTHR11831:SF4">
    <property type="entry name" value="SMALL RIBOSOMAL SUBUNIT PROTEIN US4M"/>
    <property type="match status" value="1"/>
</dbReference>
<dbReference type="Pfam" id="PF00163">
    <property type="entry name" value="Ribosomal_S4"/>
    <property type="match status" value="1"/>
</dbReference>
<dbReference type="Pfam" id="PF01479">
    <property type="entry name" value="S4"/>
    <property type="match status" value="1"/>
</dbReference>
<dbReference type="SMART" id="SM01390">
    <property type="entry name" value="Ribosomal_S4"/>
    <property type="match status" value="1"/>
</dbReference>
<dbReference type="SMART" id="SM00363">
    <property type="entry name" value="S4"/>
    <property type="match status" value="1"/>
</dbReference>
<dbReference type="SUPFAM" id="SSF55174">
    <property type="entry name" value="Alpha-L RNA-binding motif"/>
    <property type="match status" value="1"/>
</dbReference>
<dbReference type="PROSITE" id="PS00632">
    <property type="entry name" value="RIBOSOMAL_S4"/>
    <property type="match status" value="1"/>
</dbReference>
<dbReference type="PROSITE" id="PS50889">
    <property type="entry name" value="S4"/>
    <property type="match status" value="1"/>
</dbReference>
<sequence length="202" mass="23565">MSRYRGPRVKIIRRLGALPGLTNKTLKSKPGYINQSTSNKKVSQYRIRLEEKQKLRFHYGLTERQLLKYVRIARKAKGSTGQVLLQLLEMRLDNIIFRLGMAPTIPGARQLVNHRHILINNSTVDIPSYNCKPKDVITIKDRPKSQSIITKNLNSFQKQKIPNHLTFDLMQVKGLVNQIIDREWIFLKINELLVVEYYSRQV</sequence>
<geneLocation type="chloroplast"/>
<organism>
    <name type="scientific">Ricciocarpos natans</name>
    <name type="common">Liverwort</name>
    <dbReference type="NCBI Taxonomy" id="53035"/>
    <lineage>
        <taxon>Eukaryota</taxon>
        <taxon>Viridiplantae</taxon>
        <taxon>Streptophyta</taxon>
        <taxon>Embryophyta</taxon>
        <taxon>Marchantiophyta</taxon>
        <taxon>Marchantiopsida</taxon>
        <taxon>Marchantiidae</taxon>
        <taxon>Marchantiales</taxon>
        <taxon>Ricciaceae</taxon>
        <taxon>Ricciocarpos</taxon>
    </lineage>
</organism>
<name>RR4_RICNA</name>
<comment type="function">
    <text evidence="1">One of the primary rRNA binding proteins, it binds directly to 16S rRNA where it nucleates assembly of the body of the 30S subunit.</text>
</comment>
<comment type="function">
    <text evidence="1">With S5 and S12 plays an important role in translational accuracy.</text>
</comment>
<comment type="subunit">
    <text evidence="1">Part of the 30S ribosomal subunit. Contacts protein S5. The interaction surface between S4 and S5 is involved in control of translational fidelity (By similarity).</text>
</comment>
<comment type="subcellular location">
    <subcellularLocation>
        <location>Plastid</location>
        <location>Chloroplast</location>
    </subcellularLocation>
</comment>
<comment type="similarity">
    <text evidence="2">Belongs to the universal ribosomal protein uS4 family.</text>
</comment>
<accession>Q9M4C2</accession>
<evidence type="ECO:0000250" key="1"/>
<evidence type="ECO:0000305" key="2"/>
<proteinExistence type="inferred from homology"/>